<evidence type="ECO:0000250" key="1"/>
<evidence type="ECO:0000255" key="2"/>
<evidence type="ECO:0000255" key="3">
    <source>
        <dbReference type="PROSITE-ProRule" id="PRU00625"/>
    </source>
</evidence>
<evidence type="ECO:0000256" key="4">
    <source>
        <dbReference type="SAM" id="MobiDB-lite"/>
    </source>
</evidence>
<evidence type="ECO:0000305" key="5"/>
<feature type="chain" id="PRO_0000197097" description="Pre-mRNA-splicing factor CEF1">
    <location>
        <begin position="1"/>
        <end position="541"/>
    </location>
</feature>
<feature type="domain" description="HTH myb-type 1" evidence="3">
    <location>
        <begin position="1"/>
        <end position="59"/>
    </location>
</feature>
<feature type="domain" description="HTH myb-type 2" evidence="3">
    <location>
        <begin position="62"/>
        <end position="109"/>
    </location>
</feature>
<feature type="DNA-binding region" description="H-T-H motif" evidence="3">
    <location>
        <begin position="32"/>
        <end position="55"/>
    </location>
</feature>
<feature type="DNA-binding region" description="H-T-H motif" evidence="3">
    <location>
        <begin position="83"/>
        <end position="105"/>
    </location>
</feature>
<feature type="region of interest" description="Disordered" evidence="4">
    <location>
        <begin position="115"/>
        <end position="152"/>
    </location>
</feature>
<feature type="region of interest" description="Disordered" evidence="4">
    <location>
        <begin position="250"/>
        <end position="299"/>
    </location>
</feature>
<feature type="coiled-coil region" evidence="2">
    <location>
        <begin position="234"/>
        <end position="262"/>
    </location>
</feature>
<feature type="coiled-coil region" evidence="2">
    <location>
        <begin position="462"/>
        <end position="494"/>
    </location>
</feature>
<feature type="compositionally biased region" description="Low complexity" evidence="4">
    <location>
        <begin position="116"/>
        <end position="127"/>
    </location>
</feature>
<feature type="compositionally biased region" description="Basic and acidic residues" evidence="4">
    <location>
        <begin position="263"/>
        <end position="273"/>
    </location>
</feature>
<feature type="compositionally biased region" description="Basic and acidic residues" evidence="4">
    <location>
        <begin position="280"/>
        <end position="289"/>
    </location>
</feature>
<feature type="compositionally biased region" description="Polar residues" evidence="4">
    <location>
        <begin position="290"/>
        <end position="299"/>
    </location>
</feature>
<reference key="1">
    <citation type="journal article" date="2004" name="Nature">
        <title>Genome evolution in yeasts.</title>
        <authorList>
            <person name="Dujon B."/>
            <person name="Sherman D."/>
            <person name="Fischer G."/>
            <person name="Durrens P."/>
            <person name="Casaregola S."/>
            <person name="Lafontaine I."/>
            <person name="de Montigny J."/>
            <person name="Marck C."/>
            <person name="Neuveglise C."/>
            <person name="Talla E."/>
            <person name="Goffard N."/>
            <person name="Frangeul L."/>
            <person name="Aigle M."/>
            <person name="Anthouard V."/>
            <person name="Babour A."/>
            <person name="Barbe V."/>
            <person name="Barnay S."/>
            <person name="Blanchin S."/>
            <person name="Beckerich J.-M."/>
            <person name="Beyne E."/>
            <person name="Bleykasten C."/>
            <person name="Boisrame A."/>
            <person name="Boyer J."/>
            <person name="Cattolico L."/>
            <person name="Confanioleri F."/>
            <person name="de Daruvar A."/>
            <person name="Despons L."/>
            <person name="Fabre E."/>
            <person name="Fairhead C."/>
            <person name="Ferry-Dumazet H."/>
            <person name="Groppi A."/>
            <person name="Hantraye F."/>
            <person name="Hennequin C."/>
            <person name="Jauniaux N."/>
            <person name="Joyet P."/>
            <person name="Kachouri R."/>
            <person name="Kerrest A."/>
            <person name="Koszul R."/>
            <person name="Lemaire M."/>
            <person name="Lesur I."/>
            <person name="Ma L."/>
            <person name="Muller H."/>
            <person name="Nicaud J.-M."/>
            <person name="Nikolski M."/>
            <person name="Oztas S."/>
            <person name="Ozier-Kalogeropoulos O."/>
            <person name="Pellenz S."/>
            <person name="Potier S."/>
            <person name="Richard G.-F."/>
            <person name="Straub M.-L."/>
            <person name="Suleau A."/>
            <person name="Swennen D."/>
            <person name="Tekaia F."/>
            <person name="Wesolowski-Louvel M."/>
            <person name="Westhof E."/>
            <person name="Wirth B."/>
            <person name="Zeniou-Meyer M."/>
            <person name="Zivanovic Y."/>
            <person name="Bolotin-Fukuhara M."/>
            <person name="Thierry A."/>
            <person name="Bouchier C."/>
            <person name="Caudron B."/>
            <person name="Scarpelli C."/>
            <person name="Gaillardin C."/>
            <person name="Weissenbach J."/>
            <person name="Wincker P."/>
            <person name="Souciet J.-L."/>
        </authorList>
    </citation>
    <scope>NUCLEOTIDE SEQUENCE [LARGE SCALE GENOMIC DNA]</scope>
    <source>
        <strain>ATCC 2001 / BCRC 20586 / JCM 3761 / NBRC 0622 / NRRL Y-65 / CBS 138</strain>
    </source>
</reference>
<sequence length="541" mass="63042">MAPPIYVRGGLWTNIEDQILKAAVQKYGVHQWSKIASLLQKKNARQCEIRWNEYLNPTLNFEEFTKEEDKKLLELVRTLPNQWRTISELMGRPSQQCIERYNILLETELSKTDGEATTSANSAISTSFGFKPNEIHPSAETQKAKPDNDELDEDEREMLSEARARLLNTQGKKATRKVRERMLEESKRIAQIQKRRELKQAGINTSLKKSKKKYENEIDYNADVVYEIVPPAVLYDVTRENERTQKALQDFERNIAKKGKRKFKDDGEKESSPRKRSRDKRPNKEDNKETSMSITSNDSVLLNDMKKPVLNLSAPRADGENLSVSSNNTNDAVLVKKYLTECFSALPTPKNDFEILWEDSDDDDEQEIVSEEDDNSIKVQESEQLYELPMETFDIVDSSMIPSIIADPKNEFEEEYNKLIKDARTRAKPTISKEHLQIWDDLNEEIQKDISGRTSLTNPEVQISTDTNLDELRAQIQKYQQRISNYDEQLHIIKPLVENNEQICNTIIRSLIPELKSKQLKYYTRYYMFMKEQKHIKKRTK</sequence>
<protein>
    <recommendedName>
        <fullName>Pre-mRNA-splicing factor CEF1</fullName>
    </recommendedName>
</protein>
<keyword id="KW-0175">Coiled coil</keyword>
<keyword id="KW-0963">Cytoplasm</keyword>
<keyword id="KW-0238">DNA-binding</keyword>
<keyword id="KW-0507">mRNA processing</keyword>
<keyword id="KW-0508">mRNA splicing</keyword>
<keyword id="KW-0539">Nucleus</keyword>
<keyword id="KW-1185">Reference proteome</keyword>
<keyword id="KW-0677">Repeat</keyword>
<keyword id="KW-0747">Spliceosome</keyword>
<organism>
    <name type="scientific">Candida glabrata (strain ATCC 2001 / BCRC 20586 / JCM 3761 / NBRC 0622 / NRRL Y-65 / CBS 138)</name>
    <name type="common">Yeast</name>
    <name type="synonym">Nakaseomyces glabratus</name>
    <dbReference type="NCBI Taxonomy" id="284593"/>
    <lineage>
        <taxon>Eukaryota</taxon>
        <taxon>Fungi</taxon>
        <taxon>Dikarya</taxon>
        <taxon>Ascomycota</taxon>
        <taxon>Saccharomycotina</taxon>
        <taxon>Saccharomycetes</taxon>
        <taxon>Saccharomycetales</taxon>
        <taxon>Saccharomycetaceae</taxon>
        <taxon>Nakaseomyces</taxon>
    </lineage>
</organism>
<dbReference type="EMBL" id="CR380952">
    <property type="protein sequence ID" value="CAG59057.1"/>
    <property type="molecule type" value="Genomic_DNA"/>
</dbReference>
<dbReference type="RefSeq" id="XP_446133.1">
    <property type="nucleotide sequence ID" value="XM_446133.1"/>
</dbReference>
<dbReference type="SMR" id="Q6FUG1"/>
<dbReference type="FunCoup" id="Q6FUG1">
    <property type="interactions" value="158"/>
</dbReference>
<dbReference type="STRING" id="284593.Q6FUG1"/>
<dbReference type="EnsemblFungi" id="CAGL0F03751g-T">
    <property type="protein sequence ID" value="CAGL0F03751g-T-p1"/>
    <property type="gene ID" value="CAGL0F03751g"/>
</dbReference>
<dbReference type="KEGG" id="cgr:2887738"/>
<dbReference type="CGD" id="CAL0130986">
    <property type="gene designation" value="CAGL0F03751g"/>
</dbReference>
<dbReference type="VEuPathDB" id="FungiDB:CAGL0F03751g"/>
<dbReference type="eggNOG" id="KOG0050">
    <property type="taxonomic scope" value="Eukaryota"/>
</dbReference>
<dbReference type="HOGENOM" id="CLU_009082_2_1_1"/>
<dbReference type="InParanoid" id="Q6FUG1"/>
<dbReference type="OMA" id="KYGTHQW"/>
<dbReference type="Proteomes" id="UP000002428">
    <property type="component" value="Chromosome F"/>
</dbReference>
<dbReference type="GO" id="GO:0005737">
    <property type="term" value="C:cytoplasm"/>
    <property type="evidence" value="ECO:0007669"/>
    <property type="project" value="UniProtKB-SubCell"/>
</dbReference>
<dbReference type="GO" id="GO:0000974">
    <property type="term" value="C:Prp19 complex"/>
    <property type="evidence" value="ECO:0007669"/>
    <property type="project" value="EnsemblFungi"/>
</dbReference>
<dbReference type="GO" id="GO:0071006">
    <property type="term" value="C:U2-type catalytic step 1 spliceosome"/>
    <property type="evidence" value="ECO:0007669"/>
    <property type="project" value="EnsemblFungi"/>
</dbReference>
<dbReference type="GO" id="GO:0003677">
    <property type="term" value="F:DNA binding"/>
    <property type="evidence" value="ECO:0007669"/>
    <property type="project" value="UniProtKB-KW"/>
</dbReference>
<dbReference type="GO" id="GO:0000386">
    <property type="term" value="F:second spliceosomal transesterification activity"/>
    <property type="evidence" value="ECO:0007669"/>
    <property type="project" value="EnsemblFungi"/>
</dbReference>
<dbReference type="GO" id="GO:0000350">
    <property type="term" value="P:generation of catalytic spliceosome for second transesterification step"/>
    <property type="evidence" value="ECO:0007669"/>
    <property type="project" value="EnsemblFungi"/>
</dbReference>
<dbReference type="CDD" id="cd00167">
    <property type="entry name" value="SANT"/>
    <property type="match status" value="1"/>
</dbReference>
<dbReference type="CDD" id="cd11659">
    <property type="entry name" value="SANT_CDC5_II"/>
    <property type="match status" value="1"/>
</dbReference>
<dbReference type="Gene3D" id="1.10.10.60">
    <property type="entry name" value="Homeodomain-like"/>
    <property type="match status" value="2"/>
</dbReference>
<dbReference type="InterPro" id="IPR047242">
    <property type="entry name" value="CDC5L/Cef1"/>
</dbReference>
<dbReference type="InterPro" id="IPR009057">
    <property type="entry name" value="Homeodomain-like_sf"/>
</dbReference>
<dbReference type="InterPro" id="IPR017930">
    <property type="entry name" value="Myb_dom"/>
</dbReference>
<dbReference type="InterPro" id="IPR001005">
    <property type="entry name" value="SANT/Myb"/>
</dbReference>
<dbReference type="InterPro" id="IPR047240">
    <property type="entry name" value="SANT_CDC5L_II"/>
</dbReference>
<dbReference type="PANTHER" id="PTHR45885">
    <property type="entry name" value="CELL DIVISION CYCLE 5-LIKE PROTEIN"/>
    <property type="match status" value="1"/>
</dbReference>
<dbReference type="PANTHER" id="PTHR45885:SF1">
    <property type="entry name" value="CELL DIVISION CYCLE 5-LIKE PROTEIN"/>
    <property type="match status" value="1"/>
</dbReference>
<dbReference type="Pfam" id="PF13921">
    <property type="entry name" value="Myb_DNA-bind_6"/>
    <property type="match status" value="1"/>
</dbReference>
<dbReference type="SMART" id="SM00717">
    <property type="entry name" value="SANT"/>
    <property type="match status" value="2"/>
</dbReference>
<dbReference type="SUPFAM" id="SSF46689">
    <property type="entry name" value="Homeodomain-like"/>
    <property type="match status" value="1"/>
</dbReference>
<dbReference type="PROSITE" id="PS51294">
    <property type="entry name" value="HTH_MYB"/>
    <property type="match status" value="2"/>
</dbReference>
<gene>
    <name type="primary">CEF1</name>
    <name type="ordered locus">CAGL0F03751g</name>
</gene>
<name>CEF1_CANGA</name>
<accession>Q6FUG1</accession>
<comment type="function">
    <text evidence="1">Involved in pre-mRNA splicing and cell cycle control.</text>
</comment>
<comment type="subunit">
    <text evidence="1">Associated with the spliceosome.</text>
</comment>
<comment type="subcellular location">
    <subcellularLocation>
        <location evidence="1">Cytoplasm</location>
    </subcellularLocation>
    <subcellularLocation>
        <location evidence="3">Nucleus</location>
    </subcellularLocation>
</comment>
<comment type="similarity">
    <text evidence="5">Belongs to the CEF1 family.</text>
</comment>
<proteinExistence type="inferred from homology"/>